<reference key="1">
    <citation type="journal article" date="2008" name="J. Bacteriol.">
        <title>The pangenome structure of Escherichia coli: comparative genomic analysis of E. coli commensal and pathogenic isolates.</title>
        <authorList>
            <person name="Rasko D.A."/>
            <person name="Rosovitz M.J."/>
            <person name="Myers G.S.A."/>
            <person name="Mongodin E.F."/>
            <person name="Fricke W.F."/>
            <person name="Gajer P."/>
            <person name="Crabtree J."/>
            <person name="Sebaihia M."/>
            <person name="Thomson N.R."/>
            <person name="Chaudhuri R."/>
            <person name="Henderson I.R."/>
            <person name="Sperandio V."/>
            <person name="Ravel J."/>
        </authorList>
    </citation>
    <scope>NUCLEOTIDE SEQUENCE [LARGE SCALE GENOMIC DNA]</scope>
    <source>
        <strain>E24377A / ETEC</strain>
    </source>
</reference>
<gene>
    <name evidence="1" type="primary">mutH</name>
    <name type="ordered locus">EcE24377A_3151</name>
</gene>
<comment type="function">
    <text evidence="1">Sequence-specific endonuclease that cleaves unmethylated GATC sequences. It is involved in DNA mismatch repair.</text>
</comment>
<comment type="subcellular location">
    <subcellularLocation>
        <location evidence="1">Cytoplasm</location>
    </subcellularLocation>
</comment>
<comment type="similarity">
    <text evidence="1">Belongs to the MutH family.</text>
</comment>
<sequence length="229" mass="25499">MSQPRPLLSPPETEEQLLAQAQQLSGYTLGELAALAGLVTPENLKRDKGWIGVLLEIWLGASAGSKPEQDFAALGVELKTIPVDSLGRPLETTFVCVAPLTGNSGVTWETSHVRHKLKRVLWIPVEGERSIPLAQRRVGSPLLWSPNEEEDRQLREDWEELMDMIVLGQVERITARHGEYLQIRPKAANAKALTEAIGARGERILTLPRGFYLKKNFTSALLARHFLIQ</sequence>
<accession>A7ZQT7</accession>
<name>MUTH_ECO24</name>
<feature type="chain" id="PRO_1000062202" description="DNA mismatch repair protein MutH">
    <location>
        <begin position="1"/>
        <end position="229"/>
    </location>
</feature>
<dbReference type="EMBL" id="CP000800">
    <property type="protein sequence ID" value="ABV17380.1"/>
    <property type="molecule type" value="Genomic_DNA"/>
</dbReference>
<dbReference type="RefSeq" id="WP_000082188.1">
    <property type="nucleotide sequence ID" value="NC_009801.1"/>
</dbReference>
<dbReference type="SMR" id="A7ZQT7"/>
<dbReference type="GeneID" id="93779167"/>
<dbReference type="KEGG" id="ecw:EcE24377A_3151"/>
<dbReference type="HOGENOM" id="CLU_086669_0_0_6"/>
<dbReference type="Proteomes" id="UP000001122">
    <property type="component" value="Chromosome"/>
</dbReference>
<dbReference type="GO" id="GO:0005737">
    <property type="term" value="C:cytoplasm"/>
    <property type="evidence" value="ECO:0007669"/>
    <property type="project" value="UniProtKB-SubCell"/>
</dbReference>
<dbReference type="GO" id="GO:0003677">
    <property type="term" value="F:DNA binding"/>
    <property type="evidence" value="ECO:0007669"/>
    <property type="project" value="InterPro"/>
</dbReference>
<dbReference type="GO" id="GO:0004519">
    <property type="term" value="F:endonuclease activity"/>
    <property type="evidence" value="ECO:0007669"/>
    <property type="project" value="UniProtKB-UniRule"/>
</dbReference>
<dbReference type="GO" id="GO:0006304">
    <property type="term" value="P:DNA modification"/>
    <property type="evidence" value="ECO:0007669"/>
    <property type="project" value="InterPro"/>
</dbReference>
<dbReference type="GO" id="GO:0006298">
    <property type="term" value="P:mismatch repair"/>
    <property type="evidence" value="ECO:0007669"/>
    <property type="project" value="UniProtKB-UniRule"/>
</dbReference>
<dbReference type="CDD" id="cd00583">
    <property type="entry name" value="MutH-like"/>
    <property type="match status" value="1"/>
</dbReference>
<dbReference type="FunFam" id="3.40.600.10:FF:000001">
    <property type="entry name" value="DNA mismatch repair protein MutH"/>
    <property type="match status" value="1"/>
</dbReference>
<dbReference type="Gene3D" id="3.40.600.10">
    <property type="entry name" value="DNA mismatch repair MutH/Restriction endonuclease, type II"/>
    <property type="match status" value="1"/>
</dbReference>
<dbReference type="HAMAP" id="MF_00759">
    <property type="entry name" value="MutH"/>
    <property type="match status" value="1"/>
</dbReference>
<dbReference type="InterPro" id="IPR004230">
    <property type="entry name" value="DNA_mismatch_repair_MutH"/>
</dbReference>
<dbReference type="InterPro" id="IPR011337">
    <property type="entry name" value="DNA_rep_MutH/RE_typeII_Sau3AI"/>
</dbReference>
<dbReference type="InterPro" id="IPR037057">
    <property type="entry name" value="DNA_rep_MutH/T2_RE_sf"/>
</dbReference>
<dbReference type="InterPro" id="IPR011335">
    <property type="entry name" value="Restrct_endonuc-II-like"/>
</dbReference>
<dbReference type="NCBIfam" id="TIGR02248">
    <property type="entry name" value="mutH_TIGR"/>
    <property type="match status" value="1"/>
</dbReference>
<dbReference type="NCBIfam" id="NF003458">
    <property type="entry name" value="PRK05070.1"/>
    <property type="match status" value="1"/>
</dbReference>
<dbReference type="Pfam" id="PF02976">
    <property type="entry name" value="MutH"/>
    <property type="match status" value="1"/>
</dbReference>
<dbReference type="SMART" id="SM00927">
    <property type="entry name" value="MutH"/>
    <property type="match status" value="1"/>
</dbReference>
<dbReference type="SUPFAM" id="SSF52980">
    <property type="entry name" value="Restriction endonuclease-like"/>
    <property type="match status" value="1"/>
</dbReference>
<evidence type="ECO:0000255" key="1">
    <source>
        <dbReference type="HAMAP-Rule" id="MF_00759"/>
    </source>
</evidence>
<keyword id="KW-0963">Cytoplasm</keyword>
<keyword id="KW-0227">DNA damage</keyword>
<keyword id="KW-0234">DNA repair</keyword>
<keyword id="KW-0255">Endonuclease</keyword>
<keyword id="KW-0378">Hydrolase</keyword>
<keyword id="KW-0540">Nuclease</keyword>
<keyword id="KW-1185">Reference proteome</keyword>
<protein>
    <recommendedName>
        <fullName evidence="1">DNA mismatch repair protein MutH</fullName>
    </recommendedName>
    <alternativeName>
        <fullName evidence="1">Methyl-directed mismatch repair protein</fullName>
    </alternativeName>
</protein>
<organism>
    <name type="scientific">Escherichia coli O139:H28 (strain E24377A / ETEC)</name>
    <dbReference type="NCBI Taxonomy" id="331111"/>
    <lineage>
        <taxon>Bacteria</taxon>
        <taxon>Pseudomonadati</taxon>
        <taxon>Pseudomonadota</taxon>
        <taxon>Gammaproteobacteria</taxon>
        <taxon>Enterobacterales</taxon>
        <taxon>Enterobacteriaceae</taxon>
        <taxon>Escherichia</taxon>
    </lineage>
</organism>
<proteinExistence type="inferred from homology"/>